<keyword id="KW-0456">Lyase</keyword>
<keyword id="KW-1185">Reference proteome</keyword>
<sequence>MSNLENARCEACHADAPQVSDEELKELMREIPDWTPVTNDNVMMLQREFKFKNFKQALAFTNRVGDLAEEEKHHPELVTEWGKVTVTWWTHAINGLHKNDFIMAAKTDSVVDA</sequence>
<dbReference type="EC" id="4.2.1.96" evidence="1"/>
<dbReference type="EMBL" id="AE017340">
    <property type="protein sequence ID" value="AAV81565.1"/>
    <property type="molecule type" value="Genomic_DNA"/>
</dbReference>
<dbReference type="RefSeq" id="WP_011233976.1">
    <property type="nucleotide sequence ID" value="NC_006512.1"/>
</dbReference>
<dbReference type="SMR" id="Q5QU19"/>
<dbReference type="STRING" id="283942.IL0724"/>
<dbReference type="GeneID" id="41335878"/>
<dbReference type="KEGG" id="ilo:IL0724"/>
<dbReference type="eggNOG" id="COG2154">
    <property type="taxonomic scope" value="Bacteria"/>
</dbReference>
<dbReference type="HOGENOM" id="CLU_081974_2_2_6"/>
<dbReference type="OrthoDB" id="5294615at2"/>
<dbReference type="Proteomes" id="UP000001171">
    <property type="component" value="Chromosome"/>
</dbReference>
<dbReference type="GO" id="GO:0008124">
    <property type="term" value="F:4-alpha-hydroxytetrahydrobiopterin dehydratase activity"/>
    <property type="evidence" value="ECO:0007669"/>
    <property type="project" value="UniProtKB-UniRule"/>
</dbReference>
<dbReference type="GO" id="GO:0006729">
    <property type="term" value="P:tetrahydrobiopterin biosynthetic process"/>
    <property type="evidence" value="ECO:0007669"/>
    <property type="project" value="InterPro"/>
</dbReference>
<dbReference type="CDD" id="cd00913">
    <property type="entry name" value="PCD_DCoH_subfamily_a"/>
    <property type="match status" value="1"/>
</dbReference>
<dbReference type="Gene3D" id="3.30.1360.20">
    <property type="entry name" value="Transcriptional coactivator/pterin dehydratase"/>
    <property type="match status" value="1"/>
</dbReference>
<dbReference type="HAMAP" id="MF_00434">
    <property type="entry name" value="Pterin_4_alpha"/>
    <property type="match status" value="1"/>
</dbReference>
<dbReference type="InterPro" id="IPR036428">
    <property type="entry name" value="PCD_sf"/>
</dbReference>
<dbReference type="InterPro" id="IPR050376">
    <property type="entry name" value="Pterin-4-alpha-carb_dehyd"/>
</dbReference>
<dbReference type="InterPro" id="IPR001533">
    <property type="entry name" value="Pterin_deHydtase"/>
</dbReference>
<dbReference type="NCBIfam" id="NF002016">
    <property type="entry name" value="PRK00823.1-1"/>
    <property type="match status" value="1"/>
</dbReference>
<dbReference type="PANTHER" id="PTHR42805">
    <property type="entry name" value="PTERIN-4-ALPHA-CARBINOLAMINE DEHYDRATASE-RELATED"/>
    <property type="match status" value="1"/>
</dbReference>
<dbReference type="PANTHER" id="PTHR42805:SF1">
    <property type="entry name" value="PTERIN-4-ALPHA-CARBINOLAMINE DEHYDRATASE-RELATED"/>
    <property type="match status" value="1"/>
</dbReference>
<dbReference type="Pfam" id="PF01329">
    <property type="entry name" value="Pterin_4a"/>
    <property type="match status" value="1"/>
</dbReference>
<dbReference type="SUPFAM" id="SSF55248">
    <property type="entry name" value="PCD-like"/>
    <property type="match status" value="1"/>
</dbReference>
<proteinExistence type="inferred from homology"/>
<protein>
    <recommendedName>
        <fullName evidence="1">Putative pterin-4-alpha-carbinolamine dehydratase</fullName>
        <shortName evidence="1">PHS</shortName>
        <ecNumber evidence="1">4.2.1.96</ecNumber>
    </recommendedName>
    <alternativeName>
        <fullName evidence="1">4-alpha-hydroxy-tetrahydropterin dehydratase</fullName>
    </alternativeName>
    <alternativeName>
        <fullName evidence="1">Pterin carbinolamine dehydratase</fullName>
        <shortName evidence="1">PCD</shortName>
    </alternativeName>
</protein>
<evidence type="ECO:0000255" key="1">
    <source>
        <dbReference type="HAMAP-Rule" id="MF_00434"/>
    </source>
</evidence>
<organism>
    <name type="scientific">Idiomarina loihiensis (strain ATCC BAA-735 / DSM 15497 / L2-TR)</name>
    <dbReference type="NCBI Taxonomy" id="283942"/>
    <lineage>
        <taxon>Bacteria</taxon>
        <taxon>Pseudomonadati</taxon>
        <taxon>Pseudomonadota</taxon>
        <taxon>Gammaproteobacteria</taxon>
        <taxon>Alteromonadales</taxon>
        <taxon>Idiomarinaceae</taxon>
        <taxon>Idiomarina</taxon>
    </lineage>
</organism>
<reference key="1">
    <citation type="journal article" date="2004" name="Proc. Natl. Acad. Sci. U.S.A.">
        <title>Genome sequence of the deep-sea gamma-proteobacterium Idiomarina loihiensis reveals amino acid fermentation as a source of carbon and energy.</title>
        <authorList>
            <person name="Hou S."/>
            <person name="Saw J.H."/>
            <person name="Lee K.S."/>
            <person name="Freitas T.A."/>
            <person name="Belisle C."/>
            <person name="Kawarabayasi Y."/>
            <person name="Donachie S.P."/>
            <person name="Pikina A."/>
            <person name="Galperin M.Y."/>
            <person name="Koonin E.V."/>
            <person name="Makarova K.S."/>
            <person name="Omelchenko M.V."/>
            <person name="Sorokin A."/>
            <person name="Wolf Y.I."/>
            <person name="Li Q.X."/>
            <person name="Keum Y.S."/>
            <person name="Campbell S."/>
            <person name="Denery J."/>
            <person name="Aizawa S."/>
            <person name="Shibata S."/>
            <person name="Malahoff A."/>
            <person name="Alam M."/>
        </authorList>
    </citation>
    <scope>NUCLEOTIDE SEQUENCE [LARGE SCALE GENOMIC DNA]</scope>
    <source>
        <strain>ATCC BAA-735 / DSM 15497 / L2-TR</strain>
    </source>
</reference>
<accession>Q5QU19</accession>
<gene>
    <name type="ordered locus">IL0724</name>
</gene>
<name>PHS_IDILO</name>
<feature type="chain" id="PRO_0000231449" description="Putative pterin-4-alpha-carbinolamine dehydratase">
    <location>
        <begin position="1"/>
        <end position="113"/>
    </location>
</feature>
<comment type="catalytic activity">
    <reaction evidence="1">
        <text>(4aS,6R)-4a-hydroxy-L-erythro-5,6,7,8-tetrahydrobiopterin = (6R)-L-erythro-6,7-dihydrobiopterin + H2O</text>
        <dbReference type="Rhea" id="RHEA:11920"/>
        <dbReference type="ChEBI" id="CHEBI:15377"/>
        <dbReference type="ChEBI" id="CHEBI:15642"/>
        <dbReference type="ChEBI" id="CHEBI:43120"/>
        <dbReference type="EC" id="4.2.1.96"/>
    </reaction>
</comment>
<comment type="similarity">
    <text evidence="1">Belongs to the pterin-4-alpha-carbinolamine dehydratase family.</text>
</comment>